<protein>
    <recommendedName>
        <fullName evidence="1">Acetylglutamate kinase</fullName>
        <ecNumber evidence="1">2.7.2.8</ecNumber>
    </recommendedName>
    <alternativeName>
        <fullName evidence="1">N-acetyl-L-glutamate 5-phosphotransferase</fullName>
    </alternativeName>
    <alternativeName>
        <fullName evidence="1">NAG kinase</fullName>
        <shortName evidence="1">NAGK</shortName>
    </alternativeName>
</protein>
<accession>Q1GJY2</accession>
<proteinExistence type="inferred from homology"/>
<keyword id="KW-0028">Amino-acid biosynthesis</keyword>
<keyword id="KW-0055">Arginine biosynthesis</keyword>
<keyword id="KW-0067">ATP-binding</keyword>
<keyword id="KW-0963">Cytoplasm</keyword>
<keyword id="KW-0418">Kinase</keyword>
<keyword id="KW-0547">Nucleotide-binding</keyword>
<keyword id="KW-1185">Reference proteome</keyword>
<keyword id="KW-0808">Transferase</keyword>
<organism>
    <name type="scientific">Ruegeria sp. (strain TM1040)</name>
    <name type="common">Silicibacter sp.</name>
    <dbReference type="NCBI Taxonomy" id="292414"/>
    <lineage>
        <taxon>Bacteria</taxon>
        <taxon>Pseudomonadati</taxon>
        <taxon>Pseudomonadota</taxon>
        <taxon>Alphaproteobacteria</taxon>
        <taxon>Rhodobacterales</taxon>
        <taxon>Roseobacteraceae</taxon>
        <taxon>Ruegeria</taxon>
    </lineage>
</organism>
<comment type="function">
    <text evidence="1">Catalyzes the ATP-dependent phosphorylation of N-acetyl-L-glutamate.</text>
</comment>
<comment type="catalytic activity">
    <reaction evidence="1">
        <text>N-acetyl-L-glutamate + ATP = N-acetyl-L-glutamyl 5-phosphate + ADP</text>
        <dbReference type="Rhea" id="RHEA:14629"/>
        <dbReference type="ChEBI" id="CHEBI:30616"/>
        <dbReference type="ChEBI" id="CHEBI:44337"/>
        <dbReference type="ChEBI" id="CHEBI:57936"/>
        <dbReference type="ChEBI" id="CHEBI:456216"/>
        <dbReference type="EC" id="2.7.2.8"/>
    </reaction>
</comment>
<comment type="pathway">
    <text evidence="1">Amino-acid biosynthesis; L-arginine biosynthesis; N(2)-acetyl-L-ornithine from L-glutamate: step 2/4.</text>
</comment>
<comment type="subcellular location">
    <subcellularLocation>
        <location evidence="1">Cytoplasm</location>
    </subcellularLocation>
</comment>
<comment type="similarity">
    <text evidence="1">Belongs to the acetylglutamate kinase family. ArgB subfamily.</text>
</comment>
<dbReference type="EC" id="2.7.2.8" evidence="1"/>
<dbReference type="EMBL" id="CP000377">
    <property type="protein sequence ID" value="ABF63034.1"/>
    <property type="molecule type" value="Genomic_DNA"/>
</dbReference>
<dbReference type="RefSeq" id="WP_011537650.1">
    <property type="nucleotide sequence ID" value="NC_008044.1"/>
</dbReference>
<dbReference type="SMR" id="Q1GJY2"/>
<dbReference type="STRING" id="292414.TM1040_0301"/>
<dbReference type="KEGG" id="sit:TM1040_0301"/>
<dbReference type="eggNOG" id="COG0548">
    <property type="taxonomic scope" value="Bacteria"/>
</dbReference>
<dbReference type="HOGENOM" id="CLU_053680_0_0_5"/>
<dbReference type="OrthoDB" id="9803155at2"/>
<dbReference type="UniPathway" id="UPA00068">
    <property type="reaction ID" value="UER00107"/>
</dbReference>
<dbReference type="Proteomes" id="UP000000636">
    <property type="component" value="Chromosome"/>
</dbReference>
<dbReference type="GO" id="GO:0005737">
    <property type="term" value="C:cytoplasm"/>
    <property type="evidence" value="ECO:0007669"/>
    <property type="project" value="UniProtKB-SubCell"/>
</dbReference>
<dbReference type="GO" id="GO:0003991">
    <property type="term" value="F:acetylglutamate kinase activity"/>
    <property type="evidence" value="ECO:0007669"/>
    <property type="project" value="UniProtKB-UniRule"/>
</dbReference>
<dbReference type="GO" id="GO:0005524">
    <property type="term" value="F:ATP binding"/>
    <property type="evidence" value="ECO:0007669"/>
    <property type="project" value="UniProtKB-UniRule"/>
</dbReference>
<dbReference type="GO" id="GO:0042450">
    <property type="term" value="P:arginine biosynthetic process via ornithine"/>
    <property type="evidence" value="ECO:0007669"/>
    <property type="project" value="UniProtKB-UniRule"/>
</dbReference>
<dbReference type="GO" id="GO:0006526">
    <property type="term" value="P:L-arginine biosynthetic process"/>
    <property type="evidence" value="ECO:0007669"/>
    <property type="project" value="UniProtKB-UniPathway"/>
</dbReference>
<dbReference type="CDD" id="cd04250">
    <property type="entry name" value="AAK_NAGK-C"/>
    <property type="match status" value="1"/>
</dbReference>
<dbReference type="FunFam" id="3.40.1160.10:FF:000004">
    <property type="entry name" value="Acetylglutamate kinase"/>
    <property type="match status" value="1"/>
</dbReference>
<dbReference type="Gene3D" id="3.40.1160.10">
    <property type="entry name" value="Acetylglutamate kinase-like"/>
    <property type="match status" value="1"/>
</dbReference>
<dbReference type="HAMAP" id="MF_00082">
    <property type="entry name" value="ArgB"/>
    <property type="match status" value="1"/>
</dbReference>
<dbReference type="InterPro" id="IPR036393">
    <property type="entry name" value="AceGlu_kinase-like_sf"/>
</dbReference>
<dbReference type="InterPro" id="IPR004662">
    <property type="entry name" value="AcgluKinase_fam"/>
</dbReference>
<dbReference type="InterPro" id="IPR037528">
    <property type="entry name" value="ArgB"/>
</dbReference>
<dbReference type="InterPro" id="IPR001048">
    <property type="entry name" value="Asp/Glu/Uridylate_kinase"/>
</dbReference>
<dbReference type="InterPro" id="IPR001057">
    <property type="entry name" value="Glu/AcGlu_kinase"/>
</dbReference>
<dbReference type="InterPro" id="IPR041727">
    <property type="entry name" value="NAGK-C"/>
</dbReference>
<dbReference type="NCBIfam" id="TIGR00761">
    <property type="entry name" value="argB"/>
    <property type="match status" value="1"/>
</dbReference>
<dbReference type="PANTHER" id="PTHR23342">
    <property type="entry name" value="N-ACETYLGLUTAMATE SYNTHASE"/>
    <property type="match status" value="1"/>
</dbReference>
<dbReference type="PANTHER" id="PTHR23342:SF0">
    <property type="entry name" value="N-ACETYLGLUTAMATE SYNTHASE, MITOCHONDRIAL"/>
    <property type="match status" value="1"/>
</dbReference>
<dbReference type="Pfam" id="PF00696">
    <property type="entry name" value="AA_kinase"/>
    <property type="match status" value="1"/>
</dbReference>
<dbReference type="PIRSF" id="PIRSF000728">
    <property type="entry name" value="NAGK"/>
    <property type="match status" value="1"/>
</dbReference>
<dbReference type="PRINTS" id="PR00474">
    <property type="entry name" value="GLU5KINASE"/>
</dbReference>
<dbReference type="SUPFAM" id="SSF53633">
    <property type="entry name" value="Carbamate kinase-like"/>
    <property type="match status" value="1"/>
</dbReference>
<name>ARGB_RUEST</name>
<feature type="chain" id="PRO_0000264762" description="Acetylglutamate kinase">
    <location>
        <begin position="1"/>
        <end position="286"/>
    </location>
</feature>
<feature type="binding site" evidence="1">
    <location>
        <begin position="70"/>
        <end position="71"/>
    </location>
    <ligand>
        <name>substrate</name>
    </ligand>
</feature>
<feature type="binding site" evidence="1">
    <location>
        <position position="92"/>
    </location>
    <ligand>
        <name>substrate</name>
    </ligand>
</feature>
<feature type="binding site" evidence="1">
    <location>
        <position position="184"/>
    </location>
    <ligand>
        <name>substrate</name>
    </ligand>
</feature>
<feature type="site" description="Transition state stabilizer" evidence="1">
    <location>
        <position position="35"/>
    </location>
</feature>
<feature type="site" description="Transition state stabilizer" evidence="1">
    <location>
        <position position="244"/>
    </location>
</feature>
<reference key="1">
    <citation type="submission" date="2006-05" db="EMBL/GenBank/DDBJ databases">
        <title>Complete sequence of chromosome of Silicibacter sp. TM1040.</title>
        <authorList>
            <consortium name="US DOE Joint Genome Institute"/>
            <person name="Copeland A."/>
            <person name="Lucas S."/>
            <person name="Lapidus A."/>
            <person name="Barry K."/>
            <person name="Detter J.C."/>
            <person name="Glavina del Rio T."/>
            <person name="Hammon N."/>
            <person name="Israni S."/>
            <person name="Dalin E."/>
            <person name="Tice H."/>
            <person name="Pitluck S."/>
            <person name="Brettin T."/>
            <person name="Bruce D."/>
            <person name="Han C."/>
            <person name="Tapia R."/>
            <person name="Goodwin L."/>
            <person name="Thompson L.S."/>
            <person name="Gilna P."/>
            <person name="Schmutz J."/>
            <person name="Larimer F."/>
            <person name="Land M."/>
            <person name="Hauser L."/>
            <person name="Kyrpides N."/>
            <person name="Kim E."/>
            <person name="Belas R."/>
            <person name="Moran M.A."/>
            <person name="Buchan A."/>
            <person name="Gonzalez J.M."/>
            <person name="Schell M.A."/>
            <person name="Sun F."/>
            <person name="Richardson P."/>
        </authorList>
    </citation>
    <scope>NUCLEOTIDE SEQUENCE [LARGE SCALE GENOMIC DNA]</scope>
    <source>
        <strain>TM1040</strain>
    </source>
</reference>
<evidence type="ECO:0000255" key="1">
    <source>
        <dbReference type="HAMAP-Rule" id="MF_00082"/>
    </source>
</evidence>
<gene>
    <name evidence="1" type="primary">argB</name>
    <name type="ordered locus">TM1040_0301</name>
</gene>
<sequence length="286" mass="29743">MKTRDMNRDWIATAETLSSALPYLQRYDDAIVVIKLGGHAMGSDEGMESFARDVVLLRQVGVNPVIVHGGGPMINALLDKLQIKSEFVNGKRVTDAATMEVVEMVLSGMVNKRIVQAINAQGGKGIGLSGKDANLITCEATDPALGFVGTPSEVNADMLKNLFEKEFIPVIAPIGSGTAGETFNINGDTAAGAVAAALKADRLLLLTDVAGVKNAEGVVVTELKAADVEEMTAAGVIAGGMIPKTETALAAVRGGVRACTIVDGRVPNAVLLELFTDHGAGSMIRS</sequence>